<feature type="chain" id="PRO_1000004849" description="S-ribosylhomocysteine lyase">
    <location>
        <begin position="1"/>
        <end position="156"/>
    </location>
</feature>
<feature type="binding site" evidence="1">
    <location>
        <position position="56"/>
    </location>
    <ligand>
        <name>Fe cation</name>
        <dbReference type="ChEBI" id="CHEBI:24875"/>
    </ligand>
</feature>
<feature type="binding site" evidence="1">
    <location>
        <position position="60"/>
    </location>
    <ligand>
        <name>Fe cation</name>
        <dbReference type="ChEBI" id="CHEBI:24875"/>
    </ligand>
</feature>
<feature type="binding site" evidence="1">
    <location>
        <position position="123"/>
    </location>
    <ligand>
        <name>Fe cation</name>
        <dbReference type="ChEBI" id="CHEBI:24875"/>
    </ligand>
</feature>
<gene>
    <name evidence="1" type="primary">luxS</name>
    <name type="ordered locus">SAHV_2118</name>
</gene>
<proteinExistence type="inferred from homology"/>
<keyword id="KW-0071">Autoinducer synthesis</keyword>
<keyword id="KW-0408">Iron</keyword>
<keyword id="KW-0456">Lyase</keyword>
<keyword id="KW-0479">Metal-binding</keyword>
<keyword id="KW-0673">Quorum sensing</keyword>
<reference key="1">
    <citation type="journal article" date="2008" name="Antimicrob. Agents Chemother.">
        <title>Mutated response regulator graR is responsible for phenotypic conversion of Staphylococcus aureus from heterogeneous vancomycin-intermediate resistance to vancomycin-intermediate resistance.</title>
        <authorList>
            <person name="Neoh H.-M."/>
            <person name="Cui L."/>
            <person name="Yuzawa H."/>
            <person name="Takeuchi F."/>
            <person name="Matsuo M."/>
            <person name="Hiramatsu K."/>
        </authorList>
    </citation>
    <scope>NUCLEOTIDE SEQUENCE [LARGE SCALE GENOMIC DNA]</scope>
    <source>
        <strain>Mu3 / ATCC 700698</strain>
    </source>
</reference>
<dbReference type="EC" id="4.4.1.21" evidence="1"/>
<dbReference type="EMBL" id="AP009324">
    <property type="protein sequence ID" value="BAF79001.1"/>
    <property type="molecule type" value="Genomic_DNA"/>
</dbReference>
<dbReference type="RefSeq" id="WP_000164421.1">
    <property type="nucleotide sequence ID" value="NZ_CTYB01000015.1"/>
</dbReference>
<dbReference type="SMR" id="A7X4Y8"/>
<dbReference type="KEGG" id="saw:SAHV_2118"/>
<dbReference type="HOGENOM" id="CLU_107531_2_0_9"/>
<dbReference type="GO" id="GO:0005506">
    <property type="term" value="F:iron ion binding"/>
    <property type="evidence" value="ECO:0007669"/>
    <property type="project" value="InterPro"/>
</dbReference>
<dbReference type="GO" id="GO:0043768">
    <property type="term" value="F:S-ribosylhomocysteine lyase activity"/>
    <property type="evidence" value="ECO:0007669"/>
    <property type="project" value="UniProtKB-UniRule"/>
</dbReference>
<dbReference type="GO" id="GO:0009372">
    <property type="term" value="P:quorum sensing"/>
    <property type="evidence" value="ECO:0007669"/>
    <property type="project" value="UniProtKB-UniRule"/>
</dbReference>
<dbReference type="Gene3D" id="3.30.1360.80">
    <property type="entry name" value="S-ribosylhomocysteinase (LuxS)"/>
    <property type="match status" value="1"/>
</dbReference>
<dbReference type="HAMAP" id="MF_00091">
    <property type="entry name" value="LuxS"/>
    <property type="match status" value="1"/>
</dbReference>
<dbReference type="InterPro" id="IPR037005">
    <property type="entry name" value="LuxS_sf"/>
</dbReference>
<dbReference type="InterPro" id="IPR011249">
    <property type="entry name" value="Metalloenz_LuxS/M16"/>
</dbReference>
<dbReference type="InterPro" id="IPR003815">
    <property type="entry name" value="S-ribosylhomocysteinase"/>
</dbReference>
<dbReference type="NCBIfam" id="NF002604">
    <property type="entry name" value="PRK02260.1-4"/>
    <property type="match status" value="1"/>
</dbReference>
<dbReference type="PANTHER" id="PTHR35799">
    <property type="entry name" value="S-RIBOSYLHOMOCYSTEINE LYASE"/>
    <property type="match status" value="1"/>
</dbReference>
<dbReference type="PANTHER" id="PTHR35799:SF1">
    <property type="entry name" value="S-RIBOSYLHOMOCYSTEINE LYASE"/>
    <property type="match status" value="1"/>
</dbReference>
<dbReference type="Pfam" id="PF02664">
    <property type="entry name" value="LuxS"/>
    <property type="match status" value="1"/>
</dbReference>
<dbReference type="PIRSF" id="PIRSF006160">
    <property type="entry name" value="AI2"/>
    <property type="match status" value="1"/>
</dbReference>
<dbReference type="PRINTS" id="PR01487">
    <property type="entry name" value="LUXSPROTEIN"/>
</dbReference>
<dbReference type="SUPFAM" id="SSF63411">
    <property type="entry name" value="LuxS/MPP-like metallohydrolase"/>
    <property type="match status" value="1"/>
</dbReference>
<sequence length="156" mass="17514">MTKMNVESFNLDHTKVVAPFIRLAGTMEGLNGDVIHKYDIRFKQPNKEHMDMPGLHSLEHLMAENIRNHSDKVVDLSPMGCQTGFYVSFINHDNYDDVLNIVEATLNDVLNATEVPACNEVQCGWAASHSLEGAKTIAQAFLDKRNEWHDVFGTGK</sequence>
<protein>
    <recommendedName>
        <fullName evidence="1">S-ribosylhomocysteine lyase</fullName>
        <ecNumber evidence="1">4.4.1.21</ecNumber>
    </recommendedName>
    <alternativeName>
        <fullName evidence="1">AI-2 synthesis protein</fullName>
    </alternativeName>
    <alternativeName>
        <fullName evidence="1">Autoinducer-2 production protein LuxS</fullName>
    </alternativeName>
</protein>
<name>LUXS_STAA1</name>
<accession>A7X4Y8</accession>
<comment type="function">
    <text evidence="1">Involved in the synthesis of autoinducer 2 (AI-2) which is secreted by bacteria and is used to communicate both the cell density and the metabolic potential of the environment. The regulation of gene expression in response to changes in cell density is called quorum sensing. Catalyzes the transformation of S-ribosylhomocysteine (RHC) to homocysteine (HC) and 4,5-dihydroxy-2,3-pentadione (DPD).</text>
</comment>
<comment type="catalytic activity">
    <reaction evidence="1">
        <text>S-(5-deoxy-D-ribos-5-yl)-L-homocysteine = (S)-4,5-dihydroxypentane-2,3-dione + L-homocysteine</text>
        <dbReference type="Rhea" id="RHEA:17753"/>
        <dbReference type="ChEBI" id="CHEBI:29484"/>
        <dbReference type="ChEBI" id="CHEBI:58195"/>
        <dbReference type="ChEBI" id="CHEBI:58199"/>
        <dbReference type="EC" id="4.4.1.21"/>
    </reaction>
</comment>
<comment type="cofactor">
    <cofactor evidence="1">
        <name>Fe cation</name>
        <dbReference type="ChEBI" id="CHEBI:24875"/>
    </cofactor>
    <text evidence="1">Binds 1 Fe cation per subunit.</text>
</comment>
<comment type="subunit">
    <text evidence="1">Homodimer.</text>
</comment>
<comment type="similarity">
    <text evidence="1">Belongs to the LuxS family.</text>
</comment>
<organism>
    <name type="scientific">Staphylococcus aureus (strain Mu3 / ATCC 700698)</name>
    <dbReference type="NCBI Taxonomy" id="418127"/>
    <lineage>
        <taxon>Bacteria</taxon>
        <taxon>Bacillati</taxon>
        <taxon>Bacillota</taxon>
        <taxon>Bacilli</taxon>
        <taxon>Bacillales</taxon>
        <taxon>Staphylococcaceae</taxon>
        <taxon>Staphylococcus</taxon>
    </lineage>
</organism>
<evidence type="ECO:0000255" key="1">
    <source>
        <dbReference type="HAMAP-Rule" id="MF_00091"/>
    </source>
</evidence>